<feature type="chain" id="PRO_0000390569" description="Prokaryotic ubiquitin-like protein Pup">
    <location>
        <begin position="1"/>
        <end position="67"/>
    </location>
</feature>
<feature type="region of interest" description="Disordered" evidence="2">
    <location>
        <begin position="1"/>
        <end position="47"/>
    </location>
</feature>
<feature type="region of interest" description="ARC ATPase binding" evidence="1">
    <location>
        <begin position="25"/>
        <end position="61"/>
    </location>
</feature>
<feature type="compositionally biased region" description="Low complexity" evidence="2">
    <location>
        <begin position="1"/>
        <end position="11"/>
    </location>
</feature>
<feature type="modified residue" description="Deamidated glutamine" evidence="1">
    <location>
        <position position="67"/>
    </location>
</feature>
<feature type="cross-link" description="Isoglutamyl lysine isopeptide (Gln-Lys) (interchain with K-? in acceptor proteins)" evidence="1">
    <location>
        <position position="67"/>
    </location>
</feature>
<gene>
    <name evidence="1" type="primary">pup</name>
    <name type="ordered locus">Arth_2175</name>
</gene>
<sequence>MAGQEQQQPQSRESEFEDDAPATPPAPGEAQASAATQGVDDLLDEIDGVLESNAEEFVRAFVQKGGQ</sequence>
<keyword id="KW-1017">Isopeptide bond</keyword>
<keyword id="KW-1185">Reference proteome</keyword>
<keyword id="KW-0833">Ubl conjugation pathway</keyword>
<name>PUP_ARTS2</name>
<evidence type="ECO:0000255" key="1">
    <source>
        <dbReference type="HAMAP-Rule" id="MF_02106"/>
    </source>
</evidence>
<evidence type="ECO:0000256" key="2">
    <source>
        <dbReference type="SAM" id="MobiDB-lite"/>
    </source>
</evidence>
<evidence type="ECO:0000305" key="3"/>
<proteinExistence type="inferred from homology"/>
<dbReference type="EMBL" id="CP000454">
    <property type="protein sequence ID" value="ABK03555.1"/>
    <property type="status" value="ALT_INIT"/>
    <property type="molecule type" value="Genomic_DNA"/>
</dbReference>
<dbReference type="RefSeq" id="WP_043429778.1">
    <property type="nucleotide sequence ID" value="NC_008541.1"/>
</dbReference>
<dbReference type="SMR" id="A0JWY5"/>
<dbReference type="STRING" id="290399.Arth_2175"/>
<dbReference type="KEGG" id="art:Arth_2175"/>
<dbReference type="eggNOG" id="ENOG50333JS">
    <property type="taxonomic scope" value="Bacteria"/>
</dbReference>
<dbReference type="HOGENOM" id="CLU_183816_2_0_11"/>
<dbReference type="OrthoDB" id="3254977at2"/>
<dbReference type="UniPathway" id="UPA00997"/>
<dbReference type="Proteomes" id="UP000000754">
    <property type="component" value="Chromosome"/>
</dbReference>
<dbReference type="GO" id="GO:0070628">
    <property type="term" value="F:proteasome binding"/>
    <property type="evidence" value="ECO:0007669"/>
    <property type="project" value="UniProtKB-UniRule"/>
</dbReference>
<dbReference type="GO" id="GO:0031386">
    <property type="term" value="F:protein tag activity"/>
    <property type="evidence" value="ECO:0007669"/>
    <property type="project" value="UniProtKB-UniRule"/>
</dbReference>
<dbReference type="GO" id="GO:0019941">
    <property type="term" value="P:modification-dependent protein catabolic process"/>
    <property type="evidence" value="ECO:0007669"/>
    <property type="project" value="UniProtKB-UniRule"/>
</dbReference>
<dbReference type="GO" id="GO:0010498">
    <property type="term" value="P:proteasomal protein catabolic process"/>
    <property type="evidence" value="ECO:0007669"/>
    <property type="project" value="UniProtKB-UniRule"/>
</dbReference>
<dbReference type="GO" id="GO:0070490">
    <property type="term" value="P:protein pupylation"/>
    <property type="evidence" value="ECO:0007669"/>
    <property type="project" value="UniProtKB-UniRule"/>
</dbReference>
<dbReference type="HAMAP" id="MF_02106">
    <property type="entry name" value="Pup"/>
    <property type="match status" value="1"/>
</dbReference>
<dbReference type="InterPro" id="IPR008515">
    <property type="entry name" value="Ubiquitin-like_Pup"/>
</dbReference>
<dbReference type="NCBIfam" id="TIGR03687">
    <property type="entry name" value="pupylate_cterm"/>
    <property type="match status" value="1"/>
</dbReference>
<dbReference type="Pfam" id="PF05639">
    <property type="entry name" value="Pup"/>
    <property type="match status" value="1"/>
</dbReference>
<protein>
    <recommendedName>
        <fullName evidence="1">Prokaryotic ubiquitin-like protein Pup</fullName>
    </recommendedName>
    <alternativeName>
        <fullName evidence="1">Bacterial ubiquitin-like modifier</fullName>
    </alternativeName>
</protein>
<organism>
    <name type="scientific">Arthrobacter sp. (strain FB24)</name>
    <dbReference type="NCBI Taxonomy" id="290399"/>
    <lineage>
        <taxon>Bacteria</taxon>
        <taxon>Bacillati</taxon>
        <taxon>Actinomycetota</taxon>
        <taxon>Actinomycetes</taxon>
        <taxon>Micrococcales</taxon>
        <taxon>Micrococcaceae</taxon>
        <taxon>Arthrobacter</taxon>
    </lineage>
</organism>
<accession>A0JWY5</accession>
<comment type="function">
    <text evidence="1">Protein modifier that is covalently attached to lysine residues of substrate proteins, thereby targeting them for proteasomal degradation. The tagging system is termed pupylation.</text>
</comment>
<comment type="pathway">
    <text evidence="1">Protein degradation; proteasomal Pup-dependent pathway.</text>
</comment>
<comment type="subunit">
    <text evidence="1">Strongly interacts with the proteasome-associated ATPase ARC through a hydrophobic interface; the interacting region of Pup lies in its C-terminal half. There is one Pup binding site per ARC hexamer ring.</text>
</comment>
<comment type="domain">
    <text evidence="1">The N-terminal unstructured half of Pup provides a signal required to initiate unfolding and degradation by the proteasome but is not needed for pupylation, while the C-terminal helical half of Pup interacts with ARC to target proteins to the proteasome.</text>
</comment>
<comment type="PTM">
    <text evidence="1">Is modified by deamidation of its C-terminal glutamine to glutamate by the deamidase Dop, a prerequisite to the subsequent pupylation process.</text>
</comment>
<comment type="similarity">
    <text evidence="1">Belongs to the prokaryotic ubiquitin-like protein family.</text>
</comment>
<comment type="sequence caution" evidence="3">
    <conflict type="erroneous initiation">
        <sequence resource="EMBL-CDS" id="ABK03555"/>
    </conflict>
</comment>
<reference key="1">
    <citation type="journal article" date="2013" name="Stand. Genomic Sci.">
        <title>Complete genome sequence of Arthrobacter sp. strain FB24.</title>
        <authorList>
            <person name="Nakatsu C.H."/>
            <person name="Barabote R."/>
            <person name="Thompson S."/>
            <person name="Bruce D."/>
            <person name="Detter C."/>
            <person name="Brettin T."/>
            <person name="Han C."/>
            <person name="Beasley F."/>
            <person name="Chen W."/>
            <person name="Konopka A."/>
            <person name="Xie G."/>
        </authorList>
    </citation>
    <scope>NUCLEOTIDE SEQUENCE [LARGE SCALE GENOMIC DNA]</scope>
    <source>
        <strain>FB24</strain>
    </source>
</reference>